<dbReference type="EMBL" id="AC079732">
    <property type="protein sequence ID" value="AAG29231.1"/>
    <property type="molecule type" value="Genomic_DNA"/>
</dbReference>
<dbReference type="EMBL" id="CP002684">
    <property type="protein sequence ID" value="AEE33467.1"/>
    <property type="molecule type" value="Genomic_DNA"/>
</dbReference>
<dbReference type="EMBL" id="AY099566">
    <property type="protein sequence ID" value="AAM20418.1"/>
    <property type="molecule type" value="mRNA"/>
</dbReference>
<dbReference type="EMBL" id="BT008739">
    <property type="protein sequence ID" value="AAP42752.1"/>
    <property type="molecule type" value="mRNA"/>
</dbReference>
<dbReference type="EMBL" id="AY084548">
    <property type="protein sequence ID" value="AAM61116.1"/>
    <property type="molecule type" value="mRNA"/>
</dbReference>
<dbReference type="PIR" id="C96612">
    <property type="entry name" value="C96612"/>
</dbReference>
<dbReference type="RefSeq" id="NP_564725.1">
    <property type="nucleotide sequence ID" value="NM_104574.3"/>
</dbReference>
<dbReference type="SMR" id="Q9FVS1"/>
<dbReference type="BioGRID" id="27379">
    <property type="interactions" value="9"/>
</dbReference>
<dbReference type="FunCoup" id="Q9FVS1">
    <property type="interactions" value="796"/>
</dbReference>
<dbReference type="IntAct" id="Q9FVS1">
    <property type="interactions" value="1"/>
</dbReference>
<dbReference type="STRING" id="3702.Q9FVS1"/>
<dbReference type="PaxDb" id="3702-AT1G57790.1"/>
<dbReference type="ProteomicsDB" id="230676"/>
<dbReference type="EnsemblPlants" id="AT1G57790.1">
    <property type="protein sequence ID" value="AT1G57790.1"/>
    <property type="gene ID" value="AT1G57790"/>
</dbReference>
<dbReference type="GeneID" id="842154"/>
<dbReference type="Gramene" id="AT1G57790.1">
    <property type="protein sequence ID" value="AT1G57790.1"/>
    <property type="gene ID" value="AT1G57790"/>
</dbReference>
<dbReference type="KEGG" id="ath:AT1G57790"/>
<dbReference type="Araport" id="AT1G57790"/>
<dbReference type="TAIR" id="AT1G57790">
    <property type="gene designation" value="ATFDR1"/>
</dbReference>
<dbReference type="eggNOG" id="ENOG502QWFR">
    <property type="taxonomic scope" value="Eukaryota"/>
</dbReference>
<dbReference type="HOGENOM" id="CLU_060427_0_0_1"/>
<dbReference type="InParanoid" id="Q9FVS1"/>
<dbReference type="OMA" id="AVINCKP"/>
<dbReference type="OrthoDB" id="1863935at2759"/>
<dbReference type="PhylomeDB" id="Q9FVS1"/>
<dbReference type="PRO" id="PR:Q9FVS1"/>
<dbReference type="Proteomes" id="UP000006548">
    <property type="component" value="Chromosome 1"/>
</dbReference>
<dbReference type="ExpressionAtlas" id="Q9FVS1">
    <property type="expression patterns" value="baseline and differential"/>
</dbReference>
<dbReference type="CDD" id="cd09917">
    <property type="entry name" value="F-box_SF"/>
    <property type="match status" value="1"/>
</dbReference>
<dbReference type="Gene3D" id="1.20.1280.50">
    <property type="match status" value="1"/>
</dbReference>
<dbReference type="InterPro" id="IPR036047">
    <property type="entry name" value="F-box-like_dom_sf"/>
</dbReference>
<dbReference type="InterPro" id="IPR001810">
    <property type="entry name" value="F-box_dom"/>
</dbReference>
<dbReference type="InterPro" id="IPR011043">
    <property type="entry name" value="Gal_Oxase/kelch_b-propeller"/>
</dbReference>
<dbReference type="InterPro" id="IPR005174">
    <property type="entry name" value="KIB1-4_b-propeller"/>
</dbReference>
<dbReference type="PANTHER" id="PTHR33127:SF54">
    <property type="entry name" value="F-BOX DOMAIN-CONTAINING PROTEIN"/>
    <property type="match status" value="1"/>
</dbReference>
<dbReference type="PANTHER" id="PTHR33127">
    <property type="entry name" value="TRANSMEMBRANE PROTEIN"/>
    <property type="match status" value="1"/>
</dbReference>
<dbReference type="Pfam" id="PF03478">
    <property type="entry name" value="Beta-prop_KIB1-4"/>
    <property type="match status" value="1"/>
</dbReference>
<dbReference type="Pfam" id="PF12937">
    <property type="entry name" value="F-box-like"/>
    <property type="match status" value="1"/>
</dbReference>
<dbReference type="SMART" id="SM00256">
    <property type="entry name" value="FBOX"/>
    <property type="match status" value="1"/>
</dbReference>
<dbReference type="SUPFAM" id="SSF81383">
    <property type="entry name" value="F-box domain"/>
    <property type="match status" value="1"/>
</dbReference>
<dbReference type="SUPFAM" id="SSF50965">
    <property type="entry name" value="Galactose oxidase, central domain"/>
    <property type="match status" value="1"/>
</dbReference>
<reference key="1">
    <citation type="journal article" date="2000" name="Nature">
        <title>Sequence and analysis of chromosome 1 of the plant Arabidopsis thaliana.</title>
        <authorList>
            <person name="Theologis A."/>
            <person name="Ecker J.R."/>
            <person name="Palm C.J."/>
            <person name="Federspiel N.A."/>
            <person name="Kaul S."/>
            <person name="White O."/>
            <person name="Alonso J."/>
            <person name="Altafi H."/>
            <person name="Araujo R."/>
            <person name="Bowman C.L."/>
            <person name="Brooks S.Y."/>
            <person name="Buehler E."/>
            <person name="Chan A."/>
            <person name="Chao Q."/>
            <person name="Chen H."/>
            <person name="Cheuk R.F."/>
            <person name="Chin C.W."/>
            <person name="Chung M.K."/>
            <person name="Conn L."/>
            <person name="Conway A.B."/>
            <person name="Conway A.R."/>
            <person name="Creasy T.H."/>
            <person name="Dewar K."/>
            <person name="Dunn P."/>
            <person name="Etgu P."/>
            <person name="Feldblyum T.V."/>
            <person name="Feng J.-D."/>
            <person name="Fong B."/>
            <person name="Fujii C.Y."/>
            <person name="Gill J.E."/>
            <person name="Goldsmith A.D."/>
            <person name="Haas B."/>
            <person name="Hansen N.F."/>
            <person name="Hughes B."/>
            <person name="Huizar L."/>
            <person name="Hunter J.L."/>
            <person name="Jenkins J."/>
            <person name="Johnson-Hopson C."/>
            <person name="Khan S."/>
            <person name="Khaykin E."/>
            <person name="Kim C.J."/>
            <person name="Koo H.L."/>
            <person name="Kremenetskaia I."/>
            <person name="Kurtz D.B."/>
            <person name="Kwan A."/>
            <person name="Lam B."/>
            <person name="Langin-Hooper S."/>
            <person name="Lee A."/>
            <person name="Lee J.M."/>
            <person name="Lenz C.A."/>
            <person name="Li J.H."/>
            <person name="Li Y.-P."/>
            <person name="Lin X."/>
            <person name="Liu S.X."/>
            <person name="Liu Z.A."/>
            <person name="Luros J.S."/>
            <person name="Maiti R."/>
            <person name="Marziali A."/>
            <person name="Militscher J."/>
            <person name="Miranda M."/>
            <person name="Nguyen M."/>
            <person name="Nierman W.C."/>
            <person name="Osborne B.I."/>
            <person name="Pai G."/>
            <person name="Peterson J."/>
            <person name="Pham P.K."/>
            <person name="Rizzo M."/>
            <person name="Rooney T."/>
            <person name="Rowley D."/>
            <person name="Sakano H."/>
            <person name="Salzberg S.L."/>
            <person name="Schwartz J.R."/>
            <person name="Shinn P."/>
            <person name="Southwick A.M."/>
            <person name="Sun H."/>
            <person name="Tallon L.J."/>
            <person name="Tambunga G."/>
            <person name="Toriumi M.J."/>
            <person name="Town C.D."/>
            <person name="Utterback T."/>
            <person name="Van Aken S."/>
            <person name="Vaysberg M."/>
            <person name="Vysotskaia V.S."/>
            <person name="Walker M."/>
            <person name="Wu D."/>
            <person name="Yu G."/>
            <person name="Fraser C.M."/>
            <person name="Venter J.C."/>
            <person name="Davis R.W."/>
        </authorList>
    </citation>
    <scope>NUCLEOTIDE SEQUENCE [LARGE SCALE GENOMIC DNA]</scope>
    <source>
        <strain>cv. Columbia</strain>
    </source>
</reference>
<reference key="2">
    <citation type="journal article" date="2017" name="Plant J.">
        <title>Araport11: a complete reannotation of the Arabidopsis thaliana reference genome.</title>
        <authorList>
            <person name="Cheng C.Y."/>
            <person name="Krishnakumar V."/>
            <person name="Chan A.P."/>
            <person name="Thibaud-Nissen F."/>
            <person name="Schobel S."/>
            <person name="Town C.D."/>
        </authorList>
    </citation>
    <scope>GENOME REANNOTATION</scope>
    <source>
        <strain>cv. Columbia</strain>
    </source>
</reference>
<reference key="3">
    <citation type="journal article" date="2003" name="Science">
        <title>Empirical analysis of transcriptional activity in the Arabidopsis genome.</title>
        <authorList>
            <person name="Yamada K."/>
            <person name="Lim J."/>
            <person name="Dale J.M."/>
            <person name="Chen H."/>
            <person name="Shinn P."/>
            <person name="Palm C.J."/>
            <person name="Southwick A.M."/>
            <person name="Wu H.C."/>
            <person name="Kim C.J."/>
            <person name="Nguyen M."/>
            <person name="Pham P.K."/>
            <person name="Cheuk R.F."/>
            <person name="Karlin-Newmann G."/>
            <person name="Liu S.X."/>
            <person name="Lam B."/>
            <person name="Sakano H."/>
            <person name="Wu T."/>
            <person name="Yu G."/>
            <person name="Miranda M."/>
            <person name="Quach H.L."/>
            <person name="Tripp M."/>
            <person name="Chang C.H."/>
            <person name="Lee J.M."/>
            <person name="Toriumi M.J."/>
            <person name="Chan M.M."/>
            <person name="Tang C.C."/>
            <person name="Onodera C.S."/>
            <person name="Deng J.M."/>
            <person name="Akiyama K."/>
            <person name="Ansari Y."/>
            <person name="Arakawa T."/>
            <person name="Banh J."/>
            <person name="Banno F."/>
            <person name="Bowser L."/>
            <person name="Brooks S.Y."/>
            <person name="Carninci P."/>
            <person name="Chao Q."/>
            <person name="Choy N."/>
            <person name="Enju A."/>
            <person name="Goldsmith A.D."/>
            <person name="Gurjal M."/>
            <person name="Hansen N.F."/>
            <person name="Hayashizaki Y."/>
            <person name="Johnson-Hopson C."/>
            <person name="Hsuan V.W."/>
            <person name="Iida K."/>
            <person name="Karnes M."/>
            <person name="Khan S."/>
            <person name="Koesema E."/>
            <person name="Ishida J."/>
            <person name="Jiang P.X."/>
            <person name="Jones T."/>
            <person name="Kawai J."/>
            <person name="Kamiya A."/>
            <person name="Meyers C."/>
            <person name="Nakajima M."/>
            <person name="Narusaka M."/>
            <person name="Seki M."/>
            <person name="Sakurai T."/>
            <person name="Satou M."/>
            <person name="Tamse R."/>
            <person name="Vaysberg M."/>
            <person name="Wallender E.K."/>
            <person name="Wong C."/>
            <person name="Yamamura Y."/>
            <person name="Yuan S."/>
            <person name="Shinozaki K."/>
            <person name="Davis R.W."/>
            <person name="Theologis A."/>
            <person name="Ecker J.R."/>
        </authorList>
    </citation>
    <scope>NUCLEOTIDE SEQUENCE [LARGE SCALE MRNA]</scope>
    <source>
        <strain>cv. Columbia</strain>
    </source>
</reference>
<reference key="4">
    <citation type="submission" date="2002-03" db="EMBL/GenBank/DDBJ databases">
        <title>Full-length cDNA from Arabidopsis thaliana.</title>
        <authorList>
            <person name="Brover V.V."/>
            <person name="Troukhan M.E."/>
            <person name="Alexandrov N.A."/>
            <person name="Lu Y.-P."/>
            <person name="Flavell R.B."/>
            <person name="Feldmann K.A."/>
        </authorList>
    </citation>
    <scope>NUCLEOTIDE SEQUENCE [LARGE SCALE MRNA]</scope>
</reference>
<feature type="chain" id="PRO_0000283183" description="F-box/kelch-repeat protein At1g57790">
    <location>
        <begin position="1"/>
        <end position="352"/>
    </location>
</feature>
<feature type="domain" description="F-box">
    <location>
        <begin position="10"/>
        <end position="56"/>
    </location>
</feature>
<feature type="repeat" description="Kelch 1">
    <location>
        <begin position="148"/>
        <end position="189"/>
    </location>
</feature>
<feature type="repeat" description="Kelch 2">
    <location>
        <begin position="190"/>
        <end position="234"/>
    </location>
</feature>
<feature type="sequence conflict" description="In Ref. 4; AAM61116." evidence="1" ref="4">
    <original>E</original>
    <variation>G</variation>
    <location>
        <position position="233"/>
    </location>
</feature>
<gene>
    <name type="ordered locus">At1g57790</name>
    <name type="ORF">F12K22.16</name>
</gene>
<evidence type="ECO:0000305" key="1"/>
<accession>Q9FVS1</accession>
<accession>Q8LFZ6</accession>
<proteinExistence type="evidence at transcript level"/>
<keyword id="KW-0880">Kelch repeat</keyword>
<keyword id="KW-1185">Reference proteome</keyword>
<keyword id="KW-0677">Repeat</keyword>
<name>FBK23_ARATH</name>
<sequence length="352" mass="40897">MSVNTNEGSKNLWKDLPLELLSSVMTFLEIKDNVRASVVCKSWFEAAVSVRVIDKSPWLMYFPETKNTYDFYDPSNCKKYTMELPKSLVGFIVRYSKDGWLLMSQEDSSHFVLFNPFTMDVVALPFLHLFTYYQLVGFSSAPTSSECVVFTIKDYDPGHVTIRTWSPGQTMWTSMQVESQFLDVDHNNVVFSNGVFYCLNQRNHVAVFDPSLRTWNVLDVPPPRCPDDKSWNEGKFMVGYKGDILVIRTYENKDPLVFKLDLTRGIWEEKDTLGSLTIFVSRKSCESRTYVKDGMLRNSVYFPELCYNEKQSVVYSFDEGRYHLREHDLDWGKQLSSDNIWIEPPKNAFELV</sequence>
<organism>
    <name type="scientific">Arabidopsis thaliana</name>
    <name type="common">Mouse-ear cress</name>
    <dbReference type="NCBI Taxonomy" id="3702"/>
    <lineage>
        <taxon>Eukaryota</taxon>
        <taxon>Viridiplantae</taxon>
        <taxon>Streptophyta</taxon>
        <taxon>Embryophyta</taxon>
        <taxon>Tracheophyta</taxon>
        <taxon>Spermatophyta</taxon>
        <taxon>Magnoliopsida</taxon>
        <taxon>eudicotyledons</taxon>
        <taxon>Gunneridae</taxon>
        <taxon>Pentapetalae</taxon>
        <taxon>rosids</taxon>
        <taxon>malvids</taxon>
        <taxon>Brassicales</taxon>
        <taxon>Brassicaceae</taxon>
        <taxon>Camelineae</taxon>
        <taxon>Arabidopsis</taxon>
    </lineage>
</organism>
<protein>
    <recommendedName>
        <fullName>F-box/kelch-repeat protein At1g57790</fullName>
    </recommendedName>
</protein>